<reference key="1">
    <citation type="journal article" date="2006" name="BMC Genomics">
        <title>Complete genome sequence of Shigella flexneri 5b and comparison with Shigella flexneri 2a.</title>
        <authorList>
            <person name="Nie H."/>
            <person name="Yang F."/>
            <person name="Zhang X."/>
            <person name="Yang J."/>
            <person name="Chen L."/>
            <person name="Wang J."/>
            <person name="Xiong Z."/>
            <person name="Peng J."/>
            <person name="Sun L."/>
            <person name="Dong J."/>
            <person name="Xue Y."/>
            <person name="Xu X."/>
            <person name="Chen S."/>
            <person name="Yao Z."/>
            <person name="Shen Y."/>
            <person name="Jin Q."/>
        </authorList>
    </citation>
    <scope>NUCLEOTIDE SEQUENCE [LARGE SCALE GENOMIC DNA]</scope>
    <source>
        <strain>8401</strain>
    </source>
</reference>
<keyword id="KW-0029">Amino-acid transport</keyword>
<keyword id="KW-0067">ATP-binding</keyword>
<keyword id="KW-0997">Cell inner membrane</keyword>
<keyword id="KW-1003">Cell membrane</keyword>
<keyword id="KW-0472">Membrane</keyword>
<keyword id="KW-0547">Nucleotide-binding</keyword>
<keyword id="KW-1278">Translocase</keyword>
<keyword id="KW-0813">Transport</keyword>
<gene>
    <name evidence="1" type="primary">metN</name>
    <name type="ordered locus">SFV_0183</name>
</gene>
<name>METN_SHIF8</name>
<organism>
    <name type="scientific">Shigella flexneri serotype 5b (strain 8401)</name>
    <dbReference type="NCBI Taxonomy" id="373384"/>
    <lineage>
        <taxon>Bacteria</taxon>
        <taxon>Pseudomonadati</taxon>
        <taxon>Pseudomonadota</taxon>
        <taxon>Gammaproteobacteria</taxon>
        <taxon>Enterobacterales</taxon>
        <taxon>Enterobacteriaceae</taxon>
        <taxon>Shigella</taxon>
    </lineage>
</organism>
<feature type="chain" id="PRO_0000277696" description="Methionine import ATP-binding protein MetN">
    <location>
        <begin position="1"/>
        <end position="343"/>
    </location>
</feature>
<feature type="domain" description="ABC transporter" evidence="1">
    <location>
        <begin position="2"/>
        <end position="241"/>
    </location>
</feature>
<feature type="binding site" evidence="1">
    <location>
        <begin position="38"/>
        <end position="45"/>
    </location>
    <ligand>
        <name>ATP</name>
        <dbReference type="ChEBI" id="CHEBI:30616"/>
    </ligand>
</feature>
<sequence length="343" mass="37875">MIKLSNITKVFHQGTRTIQALNNVSRHVPAGQIYGVIGASGAGKSTLIRCVNLLERPTEGSVLVDGQELTTLSESELTKARRQIGMIFQHFNLLSSRTVFGNVALPLELDNTPKDEIKRRVTELLSLVGLGDKHDSYPSNLSGGQKQRVAIARALASNPKVLLCDEATSALDPATTRSILELLKDINRRLGLTILLITHEMDVVKRICDCVAVISNGELIEQDTVSEVFSHPKTPLAQKFIQSTLHLDIPEDYQERLQTEPFTDCVPMLRLEFTGQSVDAPLLSETARRFNVNNNIISAQMDYAGGVKFGIMLTEMHGTQQDTQAAIAWLQEHHVKVEVLGYV</sequence>
<dbReference type="EC" id="7.4.2.11" evidence="1"/>
<dbReference type="EMBL" id="CP000266">
    <property type="protein sequence ID" value="ABF02466.1"/>
    <property type="molecule type" value="Genomic_DNA"/>
</dbReference>
<dbReference type="RefSeq" id="WP_000594013.1">
    <property type="nucleotide sequence ID" value="NC_008258.1"/>
</dbReference>
<dbReference type="SMR" id="Q0T810"/>
<dbReference type="KEGG" id="sfv:SFV_0183"/>
<dbReference type="HOGENOM" id="CLU_000604_1_3_6"/>
<dbReference type="Proteomes" id="UP000000659">
    <property type="component" value="Chromosome"/>
</dbReference>
<dbReference type="GO" id="GO:0009276">
    <property type="term" value="C:Gram-negative-bacterium-type cell wall"/>
    <property type="evidence" value="ECO:0007669"/>
    <property type="project" value="InterPro"/>
</dbReference>
<dbReference type="GO" id="GO:0005886">
    <property type="term" value="C:plasma membrane"/>
    <property type="evidence" value="ECO:0007669"/>
    <property type="project" value="UniProtKB-SubCell"/>
</dbReference>
<dbReference type="GO" id="GO:0033232">
    <property type="term" value="F:ABC-type D-methionine transporter activity"/>
    <property type="evidence" value="ECO:0007669"/>
    <property type="project" value="UniProtKB-EC"/>
</dbReference>
<dbReference type="GO" id="GO:0005524">
    <property type="term" value="F:ATP binding"/>
    <property type="evidence" value="ECO:0007669"/>
    <property type="project" value="UniProtKB-KW"/>
</dbReference>
<dbReference type="GO" id="GO:0016887">
    <property type="term" value="F:ATP hydrolysis activity"/>
    <property type="evidence" value="ECO:0007669"/>
    <property type="project" value="InterPro"/>
</dbReference>
<dbReference type="CDD" id="cd03258">
    <property type="entry name" value="ABC_MetN_methionine_transporter"/>
    <property type="match status" value="1"/>
</dbReference>
<dbReference type="FunFam" id="3.30.70.260:FF:000014">
    <property type="entry name" value="Methionine import ATP-binding protein MetN"/>
    <property type="match status" value="1"/>
</dbReference>
<dbReference type="FunFam" id="3.40.50.300:FF:000233">
    <property type="entry name" value="Methionine import ATP-binding protein MetN"/>
    <property type="match status" value="1"/>
</dbReference>
<dbReference type="Gene3D" id="3.30.70.260">
    <property type="match status" value="1"/>
</dbReference>
<dbReference type="Gene3D" id="3.40.50.300">
    <property type="entry name" value="P-loop containing nucleotide triphosphate hydrolases"/>
    <property type="match status" value="1"/>
</dbReference>
<dbReference type="InterPro" id="IPR003593">
    <property type="entry name" value="AAA+_ATPase"/>
</dbReference>
<dbReference type="InterPro" id="IPR012692">
    <property type="entry name" value="ABC_MetN_proteobac"/>
</dbReference>
<dbReference type="InterPro" id="IPR003439">
    <property type="entry name" value="ABC_transporter-like_ATP-bd"/>
</dbReference>
<dbReference type="InterPro" id="IPR017871">
    <property type="entry name" value="ABC_transporter-like_CS"/>
</dbReference>
<dbReference type="InterPro" id="IPR045865">
    <property type="entry name" value="ACT-like_dom_sf"/>
</dbReference>
<dbReference type="InterPro" id="IPR041701">
    <property type="entry name" value="MetN_ABC"/>
</dbReference>
<dbReference type="InterPro" id="IPR050086">
    <property type="entry name" value="MetN_ABC_transporter-like"/>
</dbReference>
<dbReference type="InterPro" id="IPR018449">
    <property type="entry name" value="NIL_domain"/>
</dbReference>
<dbReference type="InterPro" id="IPR027417">
    <property type="entry name" value="P-loop_NTPase"/>
</dbReference>
<dbReference type="NCBIfam" id="TIGR02314">
    <property type="entry name" value="ABC_MetN"/>
    <property type="match status" value="1"/>
</dbReference>
<dbReference type="PANTHER" id="PTHR43166">
    <property type="entry name" value="AMINO ACID IMPORT ATP-BINDING PROTEIN"/>
    <property type="match status" value="1"/>
</dbReference>
<dbReference type="PANTHER" id="PTHR43166:SF30">
    <property type="entry name" value="METHIONINE IMPORT ATP-BINDING PROTEIN METN"/>
    <property type="match status" value="1"/>
</dbReference>
<dbReference type="Pfam" id="PF00005">
    <property type="entry name" value="ABC_tran"/>
    <property type="match status" value="1"/>
</dbReference>
<dbReference type="Pfam" id="PF09383">
    <property type="entry name" value="NIL"/>
    <property type="match status" value="1"/>
</dbReference>
<dbReference type="SMART" id="SM00382">
    <property type="entry name" value="AAA"/>
    <property type="match status" value="1"/>
</dbReference>
<dbReference type="SMART" id="SM00930">
    <property type="entry name" value="NIL"/>
    <property type="match status" value="1"/>
</dbReference>
<dbReference type="SUPFAM" id="SSF55021">
    <property type="entry name" value="ACT-like"/>
    <property type="match status" value="1"/>
</dbReference>
<dbReference type="SUPFAM" id="SSF52540">
    <property type="entry name" value="P-loop containing nucleoside triphosphate hydrolases"/>
    <property type="match status" value="1"/>
</dbReference>
<dbReference type="PROSITE" id="PS00211">
    <property type="entry name" value="ABC_TRANSPORTER_1"/>
    <property type="match status" value="1"/>
</dbReference>
<dbReference type="PROSITE" id="PS50893">
    <property type="entry name" value="ABC_TRANSPORTER_2"/>
    <property type="match status" value="1"/>
</dbReference>
<dbReference type="PROSITE" id="PS51264">
    <property type="entry name" value="METN"/>
    <property type="match status" value="1"/>
</dbReference>
<accession>Q0T810</accession>
<protein>
    <recommendedName>
        <fullName evidence="1">Methionine import ATP-binding protein MetN</fullName>
        <ecNumber evidence="1">7.4.2.11</ecNumber>
    </recommendedName>
</protein>
<evidence type="ECO:0000255" key="1">
    <source>
        <dbReference type="HAMAP-Rule" id="MF_01719"/>
    </source>
</evidence>
<comment type="function">
    <text evidence="1">Part of the ABC transporter complex MetNIQ involved in methionine import. Responsible for energy coupling to the transport system.</text>
</comment>
<comment type="catalytic activity">
    <reaction evidence="1">
        <text>L-methionine(out) + ATP + H2O = L-methionine(in) + ADP + phosphate + H(+)</text>
        <dbReference type="Rhea" id="RHEA:29779"/>
        <dbReference type="ChEBI" id="CHEBI:15377"/>
        <dbReference type="ChEBI" id="CHEBI:15378"/>
        <dbReference type="ChEBI" id="CHEBI:30616"/>
        <dbReference type="ChEBI" id="CHEBI:43474"/>
        <dbReference type="ChEBI" id="CHEBI:57844"/>
        <dbReference type="ChEBI" id="CHEBI:456216"/>
        <dbReference type="EC" id="7.4.2.11"/>
    </reaction>
</comment>
<comment type="catalytic activity">
    <reaction evidence="1">
        <text>D-methionine(out) + ATP + H2O = D-methionine(in) + ADP + phosphate + H(+)</text>
        <dbReference type="Rhea" id="RHEA:29767"/>
        <dbReference type="ChEBI" id="CHEBI:15377"/>
        <dbReference type="ChEBI" id="CHEBI:15378"/>
        <dbReference type="ChEBI" id="CHEBI:30616"/>
        <dbReference type="ChEBI" id="CHEBI:43474"/>
        <dbReference type="ChEBI" id="CHEBI:57932"/>
        <dbReference type="ChEBI" id="CHEBI:456216"/>
        <dbReference type="EC" id="7.4.2.11"/>
    </reaction>
</comment>
<comment type="subunit">
    <text evidence="1">The complex is composed of two ATP-binding proteins (MetN), two transmembrane proteins (MetI) and a solute-binding protein (MetQ).</text>
</comment>
<comment type="subcellular location">
    <subcellularLocation>
        <location evidence="1">Cell inner membrane</location>
        <topology evidence="1">Peripheral membrane protein</topology>
    </subcellularLocation>
</comment>
<comment type="similarity">
    <text evidence="1">Belongs to the ABC transporter superfamily. Methionine importer (TC 3.A.1.24) family.</text>
</comment>
<proteinExistence type="inferred from homology"/>